<organism>
    <name type="scientific">Mesorhizobium japonicum (strain LMG 29417 / CECT 9101 / MAFF 303099)</name>
    <name type="common">Mesorhizobium loti (strain MAFF 303099)</name>
    <dbReference type="NCBI Taxonomy" id="266835"/>
    <lineage>
        <taxon>Bacteria</taxon>
        <taxon>Pseudomonadati</taxon>
        <taxon>Pseudomonadota</taxon>
        <taxon>Alphaproteobacteria</taxon>
        <taxon>Hyphomicrobiales</taxon>
        <taxon>Phyllobacteriaceae</taxon>
        <taxon>Mesorhizobium</taxon>
    </lineage>
</organism>
<evidence type="ECO:0000305" key="1"/>
<protein>
    <recommendedName>
        <fullName>UPF0178 protein mlr0875</fullName>
    </recommendedName>
</protein>
<proteinExistence type="inferred from homology"/>
<sequence>MPAPTIYVDADACPVKAEVEKVAERLGVVVTYVSNGGLRPSRDPMIRNVVVSKGADAADDWIVENAKSNDVVVTADIPLAARAVALGAHVLGPTGRPFTPETIGMAVAMRDLKQHLRETGESKGYNASFAPQDRSRFLGELDRILRRALKSATPG</sequence>
<comment type="similarity">
    <text evidence="1">Belongs to the UPF0178 family.</text>
</comment>
<comment type="sequence caution" evidence="1">
    <conflict type="erroneous initiation">
        <sequence resource="EMBL-CDS" id="BAB48370"/>
    </conflict>
</comment>
<name>Y875_RHILO</name>
<reference key="1">
    <citation type="journal article" date="2000" name="DNA Res.">
        <title>Complete genome structure of the nitrogen-fixing symbiotic bacterium Mesorhizobium loti.</title>
        <authorList>
            <person name="Kaneko T."/>
            <person name="Nakamura Y."/>
            <person name="Sato S."/>
            <person name="Asamizu E."/>
            <person name="Kato T."/>
            <person name="Sasamoto S."/>
            <person name="Watanabe A."/>
            <person name="Idesawa K."/>
            <person name="Ishikawa A."/>
            <person name="Kawashima K."/>
            <person name="Kimura T."/>
            <person name="Kishida Y."/>
            <person name="Kiyokawa C."/>
            <person name="Kohara M."/>
            <person name="Matsumoto M."/>
            <person name="Matsuno A."/>
            <person name="Mochizuki Y."/>
            <person name="Nakayama S."/>
            <person name="Nakazaki N."/>
            <person name="Shimpo S."/>
            <person name="Sugimoto M."/>
            <person name="Takeuchi C."/>
            <person name="Yamada M."/>
            <person name="Tabata S."/>
        </authorList>
    </citation>
    <scope>NUCLEOTIDE SEQUENCE [LARGE SCALE GENOMIC DNA]</scope>
    <source>
        <strain>LMG 29417 / CECT 9101 / MAFF 303099</strain>
    </source>
</reference>
<gene>
    <name type="ordered locus">mlr0875</name>
</gene>
<accession>Q98LU3</accession>
<feature type="chain" id="PRO_0000175997" description="UPF0178 protein mlr0875">
    <location>
        <begin position="1"/>
        <end position="155"/>
    </location>
</feature>
<dbReference type="EMBL" id="BA000012">
    <property type="protein sequence ID" value="BAB48370.1"/>
    <property type="status" value="ALT_INIT"/>
    <property type="molecule type" value="Genomic_DNA"/>
</dbReference>
<dbReference type="RefSeq" id="WP_032930446.1">
    <property type="nucleotide sequence ID" value="NC_002678.2"/>
</dbReference>
<dbReference type="KEGG" id="mlo:mlr0875"/>
<dbReference type="eggNOG" id="COG1671">
    <property type="taxonomic scope" value="Bacteria"/>
</dbReference>
<dbReference type="HOGENOM" id="CLU_106619_2_1_5"/>
<dbReference type="Proteomes" id="UP000000552">
    <property type="component" value="Chromosome"/>
</dbReference>
<dbReference type="CDD" id="cd18720">
    <property type="entry name" value="PIN_YqxD-like"/>
    <property type="match status" value="1"/>
</dbReference>
<dbReference type="HAMAP" id="MF_00489">
    <property type="entry name" value="UPF0178"/>
    <property type="match status" value="1"/>
</dbReference>
<dbReference type="InterPro" id="IPR003791">
    <property type="entry name" value="UPF0178"/>
</dbReference>
<dbReference type="NCBIfam" id="NF001095">
    <property type="entry name" value="PRK00124.1"/>
    <property type="match status" value="1"/>
</dbReference>
<dbReference type="PANTHER" id="PTHR35146">
    <property type="entry name" value="UPF0178 PROTEIN YAII"/>
    <property type="match status" value="1"/>
</dbReference>
<dbReference type="PANTHER" id="PTHR35146:SF1">
    <property type="entry name" value="UPF0178 PROTEIN YAII"/>
    <property type="match status" value="1"/>
</dbReference>
<dbReference type="Pfam" id="PF02639">
    <property type="entry name" value="DUF188"/>
    <property type="match status" value="1"/>
</dbReference>